<reference key="1">
    <citation type="journal article" date="2010" name="Appl. Environ. Microbiol.">
        <title>The genome sequence of Psychrobacter arcticus 273-4, a psychroactive Siberian permafrost bacterium, reveals mechanisms for adaptation to low-temperature growth.</title>
        <authorList>
            <person name="Ayala-del-Rio H.L."/>
            <person name="Chain P.S."/>
            <person name="Grzymski J.J."/>
            <person name="Ponder M.A."/>
            <person name="Ivanova N."/>
            <person name="Bergholz P.W."/>
            <person name="Di Bartolo G."/>
            <person name="Hauser L."/>
            <person name="Land M."/>
            <person name="Bakermans C."/>
            <person name="Rodrigues D."/>
            <person name="Klappenbach J."/>
            <person name="Zarka D."/>
            <person name="Larimer F."/>
            <person name="Richardson P."/>
            <person name="Murray A."/>
            <person name="Thomashow M."/>
            <person name="Tiedje J.M."/>
        </authorList>
    </citation>
    <scope>NUCLEOTIDE SEQUENCE [LARGE SCALE GENOMIC DNA]</scope>
    <source>
        <strain>DSM 17307 / VKM B-2377 / 273-4</strain>
    </source>
</reference>
<protein>
    <recommendedName>
        <fullName evidence="1">Diaminopimelate epimerase</fullName>
        <shortName evidence="1">DAP epimerase</shortName>
        <ecNumber evidence="1">5.1.1.7</ecNumber>
    </recommendedName>
    <alternativeName>
        <fullName evidence="1">PLP-independent amino acid racemase</fullName>
    </alternativeName>
</protein>
<organism>
    <name type="scientific">Psychrobacter arcticus (strain DSM 17307 / VKM B-2377 / 273-4)</name>
    <dbReference type="NCBI Taxonomy" id="259536"/>
    <lineage>
        <taxon>Bacteria</taxon>
        <taxon>Pseudomonadati</taxon>
        <taxon>Pseudomonadota</taxon>
        <taxon>Gammaproteobacteria</taxon>
        <taxon>Moraxellales</taxon>
        <taxon>Moraxellaceae</taxon>
        <taxon>Psychrobacter</taxon>
    </lineage>
</organism>
<feature type="chain" id="PRO_1000011938" description="Diaminopimelate epimerase">
    <location>
        <begin position="1"/>
        <end position="295"/>
    </location>
</feature>
<feature type="active site" description="Proton donor" evidence="1">
    <location>
        <position position="75"/>
    </location>
</feature>
<feature type="active site" description="Proton acceptor" evidence="1">
    <location>
        <position position="222"/>
    </location>
</feature>
<feature type="binding site" evidence="1">
    <location>
        <position position="13"/>
    </location>
    <ligand>
        <name>substrate</name>
    </ligand>
</feature>
<feature type="binding site" evidence="1">
    <location>
        <position position="46"/>
    </location>
    <ligand>
        <name>substrate</name>
    </ligand>
</feature>
<feature type="binding site" evidence="1">
    <location>
        <position position="66"/>
    </location>
    <ligand>
        <name>substrate</name>
    </ligand>
</feature>
<feature type="binding site" evidence="1">
    <location>
        <begin position="76"/>
        <end position="77"/>
    </location>
    <ligand>
        <name>substrate</name>
    </ligand>
</feature>
<feature type="binding site" evidence="1">
    <location>
        <position position="162"/>
    </location>
    <ligand>
        <name>substrate</name>
    </ligand>
</feature>
<feature type="binding site" evidence="1">
    <location>
        <position position="195"/>
    </location>
    <ligand>
        <name>substrate</name>
    </ligand>
</feature>
<feature type="binding site" evidence="1">
    <location>
        <begin position="213"/>
        <end position="214"/>
    </location>
    <ligand>
        <name>substrate</name>
    </ligand>
</feature>
<feature type="binding site" evidence="1">
    <location>
        <begin position="223"/>
        <end position="224"/>
    </location>
    <ligand>
        <name>substrate</name>
    </ligand>
</feature>
<feature type="site" description="Could be important to modulate the pK values of the two catalytic cysteine residues" evidence="1">
    <location>
        <position position="164"/>
    </location>
</feature>
<feature type="site" description="Could be important to modulate the pK values of the two catalytic cysteine residues" evidence="1">
    <location>
        <position position="213"/>
    </location>
</feature>
<feature type="site" description="Important for dimerization" evidence="1">
    <location>
        <position position="274"/>
    </location>
</feature>
<dbReference type="EC" id="5.1.1.7" evidence="1"/>
<dbReference type="EMBL" id="CP000082">
    <property type="protein sequence ID" value="AAZ18073.1"/>
    <property type="molecule type" value="Genomic_DNA"/>
</dbReference>
<dbReference type="RefSeq" id="WP_011279512.1">
    <property type="nucleotide sequence ID" value="NC_007204.1"/>
</dbReference>
<dbReference type="SMR" id="Q4FV85"/>
<dbReference type="STRING" id="259536.Psyc_0200"/>
<dbReference type="KEGG" id="par:Psyc_0200"/>
<dbReference type="eggNOG" id="COG0253">
    <property type="taxonomic scope" value="Bacteria"/>
</dbReference>
<dbReference type="HOGENOM" id="CLU_053306_1_1_6"/>
<dbReference type="OrthoDB" id="9805408at2"/>
<dbReference type="UniPathway" id="UPA00034">
    <property type="reaction ID" value="UER00025"/>
</dbReference>
<dbReference type="Proteomes" id="UP000000546">
    <property type="component" value="Chromosome"/>
</dbReference>
<dbReference type="GO" id="GO:0005829">
    <property type="term" value="C:cytosol"/>
    <property type="evidence" value="ECO:0007669"/>
    <property type="project" value="TreeGrafter"/>
</dbReference>
<dbReference type="GO" id="GO:0008837">
    <property type="term" value="F:diaminopimelate epimerase activity"/>
    <property type="evidence" value="ECO:0007669"/>
    <property type="project" value="UniProtKB-UniRule"/>
</dbReference>
<dbReference type="GO" id="GO:0009089">
    <property type="term" value="P:lysine biosynthetic process via diaminopimelate"/>
    <property type="evidence" value="ECO:0007669"/>
    <property type="project" value="UniProtKB-UniRule"/>
</dbReference>
<dbReference type="FunFam" id="3.10.310.10:FF:000001">
    <property type="entry name" value="Diaminopimelate epimerase"/>
    <property type="match status" value="1"/>
</dbReference>
<dbReference type="FunFam" id="3.10.310.10:FF:000004">
    <property type="entry name" value="Diaminopimelate epimerase"/>
    <property type="match status" value="1"/>
</dbReference>
<dbReference type="Gene3D" id="3.10.310.10">
    <property type="entry name" value="Diaminopimelate Epimerase, Chain A, domain 1"/>
    <property type="match status" value="2"/>
</dbReference>
<dbReference type="HAMAP" id="MF_00197">
    <property type="entry name" value="DAP_epimerase"/>
    <property type="match status" value="1"/>
</dbReference>
<dbReference type="InterPro" id="IPR018510">
    <property type="entry name" value="DAP_epimerase_AS"/>
</dbReference>
<dbReference type="InterPro" id="IPR001653">
    <property type="entry name" value="DAP_epimerase_DapF"/>
</dbReference>
<dbReference type="NCBIfam" id="TIGR00652">
    <property type="entry name" value="DapF"/>
    <property type="match status" value="1"/>
</dbReference>
<dbReference type="PANTHER" id="PTHR31689:SF0">
    <property type="entry name" value="DIAMINOPIMELATE EPIMERASE"/>
    <property type="match status" value="1"/>
</dbReference>
<dbReference type="PANTHER" id="PTHR31689">
    <property type="entry name" value="DIAMINOPIMELATE EPIMERASE, CHLOROPLASTIC"/>
    <property type="match status" value="1"/>
</dbReference>
<dbReference type="Pfam" id="PF01678">
    <property type="entry name" value="DAP_epimerase"/>
    <property type="match status" value="2"/>
</dbReference>
<dbReference type="SUPFAM" id="SSF54506">
    <property type="entry name" value="Diaminopimelate epimerase-like"/>
    <property type="match status" value="1"/>
</dbReference>
<dbReference type="PROSITE" id="PS01326">
    <property type="entry name" value="DAP_EPIMERASE"/>
    <property type="match status" value="1"/>
</dbReference>
<comment type="function">
    <text evidence="1">Catalyzes the stereoinversion of LL-2,6-diaminopimelate (L,L-DAP) to meso-diaminopimelate (meso-DAP), a precursor of L-lysine and an essential component of the bacterial peptidoglycan.</text>
</comment>
<comment type="catalytic activity">
    <reaction evidence="1">
        <text>(2S,6S)-2,6-diaminopimelate = meso-2,6-diaminopimelate</text>
        <dbReference type="Rhea" id="RHEA:15393"/>
        <dbReference type="ChEBI" id="CHEBI:57609"/>
        <dbReference type="ChEBI" id="CHEBI:57791"/>
        <dbReference type="EC" id="5.1.1.7"/>
    </reaction>
</comment>
<comment type="pathway">
    <text evidence="1">Amino-acid biosynthesis; L-lysine biosynthesis via DAP pathway; DL-2,6-diaminopimelate from LL-2,6-diaminopimelate: step 1/1.</text>
</comment>
<comment type="subunit">
    <text evidence="1">Homodimer.</text>
</comment>
<comment type="subcellular location">
    <subcellularLocation>
        <location evidence="1">Cytoplasm</location>
    </subcellularLocation>
</comment>
<comment type="similarity">
    <text evidence="1">Belongs to the diaminopimelate epimerase family.</text>
</comment>
<evidence type="ECO:0000255" key="1">
    <source>
        <dbReference type="HAMAP-Rule" id="MF_00197"/>
    </source>
</evidence>
<proteinExistence type="inferred from homology"/>
<name>DAPF_PSYA2</name>
<accession>Q4FV85</accession>
<keyword id="KW-0028">Amino-acid biosynthesis</keyword>
<keyword id="KW-0963">Cytoplasm</keyword>
<keyword id="KW-0413">Isomerase</keyword>
<keyword id="KW-0457">Lysine biosynthesis</keyword>
<keyword id="KW-1185">Reference proteome</keyword>
<gene>
    <name evidence="1" type="primary">dapF</name>
    <name type="ordered locus">Psyc_0200</name>
</gene>
<sequence>MLIEFTKMHGLGNDFMVIDLVTQRLDLTKDLVQLLGDRHLGIGFDQLLVVEPPMRPDVDFSYRIFNTDGTEVEQCGNGARCFARFVQARKLSFKQRLRVETASGIISLTTDHYGWVEVDMGKPKFEPSEIPFTPRATTKIQNAYHLDVNGTPVQLYVANMGNPHAVIKVDDVLDADVESLGRAIESHPAFPERVNVGFMQVMNQRHIRLRVYERGVGETQACGTGACAAVAIGIREGWLDEGEDVRAQLYGGSMVIKWQPGYSVMMTGPTAFVYEGVFSPDGLMAQAGIKPNPEI</sequence>